<comment type="similarity">
    <text evidence="1">Belongs to the SfsA family.</text>
</comment>
<sequence length="235" mass="25961">MSFDQILLPGILRRRYQRFFADVALETGESIVAHCPNTGSMRGLAEPGLGVYVSRANNPRRKLAYTLELVDAHTSLVGVHTGRANILTKEAIAAGRISQLLGYGEIRQEVRYSKNSRIDLLLEDPSTQQCCYVEVKSVTLRQGDGAACFPDAVTTRGAKHLDDLAATVCSPRQRAVMFYLVQREDCRYFTPADDIDPRYGAKLRSAIEQGVEILAYACQVSSQGIQVTQSLPIHL</sequence>
<reference key="1">
    <citation type="journal article" date="2006" name="Appl. Environ. Microbiol.">
        <title>Complete genome sequence of the marine, chemolithoautotrophic, ammonia-oxidizing bacterium Nitrosococcus oceani ATCC 19707.</title>
        <authorList>
            <person name="Klotz M.G."/>
            <person name="Arp D.J."/>
            <person name="Chain P.S.G."/>
            <person name="El-Sheikh A.F."/>
            <person name="Hauser L.J."/>
            <person name="Hommes N.G."/>
            <person name="Larimer F.W."/>
            <person name="Malfatti S.A."/>
            <person name="Norton J.M."/>
            <person name="Poret-Peterson A.T."/>
            <person name="Vergez L.M."/>
            <person name="Ward B.B."/>
        </authorList>
    </citation>
    <scope>NUCLEOTIDE SEQUENCE [LARGE SCALE GENOMIC DNA]</scope>
    <source>
        <strain>ATCC 19707 / BCRC 17464 / JCM 30415 / NCIMB 11848 / C-107</strain>
    </source>
</reference>
<accession>Q3J8V9</accession>
<gene>
    <name evidence="1" type="primary">sfsA</name>
    <name type="ordered locus">Noc_2279</name>
</gene>
<evidence type="ECO:0000255" key="1">
    <source>
        <dbReference type="HAMAP-Rule" id="MF_00095"/>
    </source>
</evidence>
<proteinExistence type="inferred from homology"/>
<name>SFSA_NITOC</name>
<dbReference type="EMBL" id="CP000127">
    <property type="protein sequence ID" value="ABA58737.1"/>
    <property type="molecule type" value="Genomic_DNA"/>
</dbReference>
<dbReference type="RefSeq" id="WP_002811672.1">
    <property type="nucleotide sequence ID" value="NC_007484.1"/>
</dbReference>
<dbReference type="SMR" id="Q3J8V9"/>
<dbReference type="FunCoup" id="Q3J8V9">
    <property type="interactions" value="14"/>
</dbReference>
<dbReference type="STRING" id="323261.Noc_2279"/>
<dbReference type="KEGG" id="noc:Noc_2279"/>
<dbReference type="eggNOG" id="COG1489">
    <property type="taxonomic scope" value="Bacteria"/>
</dbReference>
<dbReference type="HOGENOM" id="CLU_052299_2_0_6"/>
<dbReference type="InParanoid" id="Q3J8V9"/>
<dbReference type="Proteomes" id="UP000006838">
    <property type="component" value="Chromosome"/>
</dbReference>
<dbReference type="GO" id="GO:0003677">
    <property type="term" value="F:DNA binding"/>
    <property type="evidence" value="ECO:0007669"/>
    <property type="project" value="InterPro"/>
</dbReference>
<dbReference type="CDD" id="cd22359">
    <property type="entry name" value="SfsA-like_bacterial"/>
    <property type="match status" value="1"/>
</dbReference>
<dbReference type="Gene3D" id="2.40.50.580">
    <property type="match status" value="1"/>
</dbReference>
<dbReference type="Gene3D" id="3.40.1350.60">
    <property type="match status" value="1"/>
</dbReference>
<dbReference type="HAMAP" id="MF_00095">
    <property type="entry name" value="SfsA"/>
    <property type="match status" value="1"/>
</dbReference>
<dbReference type="InterPro" id="IPR005224">
    <property type="entry name" value="SfsA"/>
</dbReference>
<dbReference type="InterPro" id="IPR040452">
    <property type="entry name" value="SfsA_C"/>
</dbReference>
<dbReference type="InterPro" id="IPR041465">
    <property type="entry name" value="SfsA_N"/>
</dbReference>
<dbReference type="NCBIfam" id="TIGR00230">
    <property type="entry name" value="sfsA"/>
    <property type="match status" value="1"/>
</dbReference>
<dbReference type="PANTHER" id="PTHR30545">
    <property type="entry name" value="SUGAR FERMENTATION STIMULATION PROTEIN A"/>
    <property type="match status" value="1"/>
</dbReference>
<dbReference type="PANTHER" id="PTHR30545:SF2">
    <property type="entry name" value="SUGAR FERMENTATION STIMULATION PROTEIN A"/>
    <property type="match status" value="1"/>
</dbReference>
<dbReference type="Pfam" id="PF03749">
    <property type="entry name" value="SfsA"/>
    <property type="match status" value="1"/>
</dbReference>
<dbReference type="Pfam" id="PF17746">
    <property type="entry name" value="SfsA_N"/>
    <property type="match status" value="1"/>
</dbReference>
<protein>
    <recommendedName>
        <fullName evidence="1">Sugar fermentation stimulation protein homolog</fullName>
    </recommendedName>
</protein>
<organism>
    <name type="scientific">Nitrosococcus oceani (strain ATCC 19707 / BCRC 17464 / JCM 30415 / NCIMB 11848 / C-107)</name>
    <dbReference type="NCBI Taxonomy" id="323261"/>
    <lineage>
        <taxon>Bacteria</taxon>
        <taxon>Pseudomonadati</taxon>
        <taxon>Pseudomonadota</taxon>
        <taxon>Gammaproteobacteria</taxon>
        <taxon>Chromatiales</taxon>
        <taxon>Chromatiaceae</taxon>
        <taxon>Nitrosococcus</taxon>
    </lineage>
</organism>
<keyword id="KW-1185">Reference proteome</keyword>
<feature type="chain" id="PRO_1000007998" description="Sugar fermentation stimulation protein homolog">
    <location>
        <begin position="1"/>
        <end position="235"/>
    </location>
</feature>